<reference key="1">
    <citation type="journal article" date="1999" name="Nature">
        <title>Evidence for lateral gene transfer between Archaea and Bacteria from genome sequence of Thermotoga maritima.</title>
        <authorList>
            <person name="Nelson K.E."/>
            <person name="Clayton R.A."/>
            <person name="Gill S.R."/>
            <person name="Gwinn M.L."/>
            <person name="Dodson R.J."/>
            <person name="Haft D.H."/>
            <person name="Hickey E.K."/>
            <person name="Peterson J.D."/>
            <person name="Nelson W.C."/>
            <person name="Ketchum K.A."/>
            <person name="McDonald L.A."/>
            <person name="Utterback T.R."/>
            <person name="Malek J.A."/>
            <person name="Linher K.D."/>
            <person name="Garrett M.M."/>
            <person name="Stewart A.M."/>
            <person name="Cotton M.D."/>
            <person name="Pratt M.S."/>
            <person name="Phillips C.A."/>
            <person name="Richardson D.L."/>
            <person name="Heidelberg J.F."/>
            <person name="Sutton G.G."/>
            <person name="Fleischmann R.D."/>
            <person name="Eisen J.A."/>
            <person name="White O."/>
            <person name="Salzberg S.L."/>
            <person name="Smith H.O."/>
            <person name="Venter J.C."/>
            <person name="Fraser C.M."/>
        </authorList>
    </citation>
    <scope>NUCLEOTIDE SEQUENCE [LARGE SCALE GENOMIC DNA]</scope>
    <source>
        <strain>ATCC 43589 / DSM 3109 / JCM 10099 / NBRC 100826 / MSB8</strain>
    </source>
</reference>
<reference key="2">
    <citation type="journal article" date="2005" name="Proteins">
        <title>Crystal structure of S-adenosylmethionine:tRNA ribosyltransferase-isomerase (QueA) from Thermotoga maritima at 2.0 A resolution reveals a new fold.</title>
        <authorList>
            <person name="Mathews I."/>
            <person name="Schwarzenbacher R."/>
            <person name="McMullan D."/>
            <person name="Abdubek P."/>
            <person name="Ambing E."/>
            <person name="Axelrod H."/>
            <person name="Biorac T."/>
            <person name="Canaves J.M."/>
            <person name="Chiu H.-J."/>
            <person name="Deacon A.M."/>
            <person name="DiDonato M."/>
            <person name="Elsliger M.-A."/>
            <person name="Godzik A."/>
            <person name="Grittini C."/>
            <person name="Grzechnik S.K."/>
            <person name="Hale J."/>
            <person name="Hampton E."/>
            <person name="Han G.W."/>
            <person name="Haugen J."/>
            <person name="Hornsby M."/>
            <person name="Jaroszewski L."/>
            <person name="Klock H.E."/>
            <person name="Koesema E."/>
            <person name="Kreusch A."/>
            <person name="Kuhn P."/>
            <person name="Lesley S.A."/>
            <person name="Levin I."/>
            <person name="Miller M.D."/>
            <person name="Moy K."/>
            <person name="Nigoghossian E."/>
            <person name="Ouyang J."/>
            <person name="Paulsen J."/>
            <person name="Quijano K."/>
            <person name="Reyes R."/>
            <person name="Spraggon G."/>
            <person name="Stevens R.C."/>
            <person name="van den Bedem H."/>
            <person name="Velasquez J."/>
            <person name="Vincent J."/>
            <person name="White A."/>
            <person name="Wolf G."/>
            <person name="Xu Q."/>
            <person name="Hodgson K.O."/>
            <person name="Wooley J."/>
            <person name="Wilson I.A."/>
        </authorList>
    </citation>
    <scope>X-RAY CRYSTALLOGRAPHY (2.0 ANGSTROMS)</scope>
    <scope>SUBUNIT</scope>
</reference>
<evidence type="ECO:0000250" key="1"/>
<evidence type="ECO:0000269" key="2">
    <source>
    </source>
</evidence>
<evidence type="ECO:0000305" key="3"/>
<evidence type="ECO:0007829" key="4">
    <source>
        <dbReference type="PDB" id="1VKY"/>
    </source>
</evidence>
<accession>Q9WZ44</accession>
<organism>
    <name type="scientific">Thermotoga maritima (strain ATCC 43589 / DSM 3109 / JCM 10099 / NBRC 100826 / MSB8)</name>
    <dbReference type="NCBI Taxonomy" id="243274"/>
    <lineage>
        <taxon>Bacteria</taxon>
        <taxon>Thermotogati</taxon>
        <taxon>Thermotogota</taxon>
        <taxon>Thermotogae</taxon>
        <taxon>Thermotogales</taxon>
        <taxon>Thermotogaceae</taxon>
        <taxon>Thermotoga</taxon>
    </lineage>
</organism>
<comment type="function">
    <text evidence="1">Transfers and isomerizes the ribose moiety from AdoMet to the 7-aminomethyl group of 7-deazaguanine (preQ1-tRNA) to give epoxyqueuosine (oQ-tRNA).</text>
</comment>
<comment type="catalytic activity">
    <reaction>
        <text>7-aminomethyl-7-carbaguanosine(34) in tRNA + S-adenosyl-L-methionine = epoxyqueuosine(34) in tRNA + adenine + L-methionine + 2 H(+)</text>
        <dbReference type="Rhea" id="RHEA:32155"/>
        <dbReference type="Rhea" id="RHEA-COMP:10342"/>
        <dbReference type="Rhea" id="RHEA-COMP:18582"/>
        <dbReference type="ChEBI" id="CHEBI:15378"/>
        <dbReference type="ChEBI" id="CHEBI:16708"/>
        <dbReference type="ChEBI" id="CHEBI:57844"/>
        <dbReference type="ChEBI" id="CHEBI:59789"/>
        <dbReference type="ChEBI" id="CHEBI:82833"/>
        <dbReference type="ChEBI" id="CHEBI:194443"/>
        <dbReference type="EC" id="2.4.99.17"/>
    </reaction>
</comment>
<comment type="pathway">
    <text>tRNA modification; tRNA-queuosine biosynthesis.</text>
</comment>
<comment type="subunit">
    <text evidence="2">Monomer.</text>
</comment>
<comment type="subcellular location">
    <subcellularLocation>
        <location evidence="1">Cytoplasm</location>
    </subcellularLocation>
</comment>
<comment type="similarity">
    <text evidence="3">Belongs to the QueA family.</text>
</comment>
<keyword id="KW-0002">3D-structure</keyword>
<keyword id="KW-0963">Cytoplasm</keyword>
<keyword id="KW-0671">Queuosine biosynthesis</keyword>
<keyword id="KW-1185">Reference proteome</keyword>
<keyword id="KW-0949">S-adenosyl-L-methionine</keyword>
<keyword id="KW-0808">Transferase</keyword>
<dbReference type="EC" id="2.4.99.17"/>
<dbReference type="EMBL" id="AE000512">
    <property type="protein sequence ID" value="AAD35659.1"/>
    <property type="molecule type" value="Genomic_DNA"/>
</dbReference>
<dbReference type="PIR" id="A72360">
    <property type="entry name" value="A72360"/>
</dbReference>
<dbReference type="RefSeq" id="NP_228384.1">
    <property type="nucleotide sequence ID" value="NC_000853.1"/>
</dbReference>
<dbReference type="RefSeq" id="WP_004081288.1">
    <property type="nucleotide sequence ID" value="NC_000853.1"/>
</dbReference>
<dbReference type="PDB" id="1VKY">
    <property type="method" value="X-ray"/>
    <property type="resolution" value="2.00 A"/>
    <property type="chains" value="A/B=1-335"/>
</dbReference>
<dbReference type="PDBsum" id="1VKY"/>
<dbReference type="SMR" id="Q9WZ44"/>
<dbReference type="FunCoup" id="Q9WZ44">
    <property type="interactions" value="284"/>
</dbReference>
<dbReference type="STRING" id="243274.TM_0574"/>
<dbReference type="PaxDb" id="243274-THEMA_01800"/>
<dbReference type="EnsemblBacteria" id="AAD35659">
    <property type="protein sequence ID" value="AAD35659"/>
    <property type="gene ID" value="TM_0574"/>
</dbReference>
<dbReference type="KEGG" id="tma:TM0574"/>
<dbReference type="KEGG" id="tmi:THEMA_01800"/>
<dbReference type="KEGG" id="tmm:Tmari_0572"/>
<dbReference type="KEGG" id="tmw:THMA_0588"/>
<dbReference type="eggNOG" id="COG0809">
    <property type="taxonomic scope" value="Bacteria"/>
</dbReference>
<dbReference type="InParanoid" id="Q9WZ44"/>
<dbReference type="OrthoDB" id="9805933at2"/>
<dbReference type="BRENDA" id="2.4.99.17">
    <property type="organism ID" value="6331"/>
</dbReference>
<dbReference type="UniPathway" id="UPA00392"/>
<dbReference type="EvolutionaryTrace" id="Q9WZ44"/>
<dbReference type="Proteomes" id="UP000008183">
    <property type="component" value="Chromosome"/>
</dbReference>
<dbReference type="GO" id="GO:0005737">
    <property type="term" value="C:cytoplasm"/>
    <property type="evidence" value="ECO:0007669"/>
    <property type="project" value="UniProtKB-SubCell"/>
</dbReference>
<dbReference type="GO" id="GO:0051075">
    <property type="term" value="F:S-adenosylmethionine:tRNA ribosyltransferase-isomerase activity"/>
    <property type="evidence" value="ECO:0000318"/>
    <property type="project" value="GO_Central"/>
</dbReference>
<dbReference type="GO" id="GO:0008616">
    <property type="term" value="P:queuosine biosynthetic process"/>
    <property type="evidence" value="ECO:0000318"/>
    <property type="project" value="GO_Central"/>
</dbReference>
<dbReference type="GO" id="GO:0002099">
    <property type="term" value="P:tRNA wobble guanine modification"/>
    <property type="evidence" value="ECO:0000318"/>
    <property type="project" value="GO_Central"/>
</dbReference>
<dbReference type="FunFam" id="2.40.10.240:FF:000002">
    <property type="entry name" value="S-adenosylmethionine:tRNA ribosyltransferase-isomerase"/>
    <property type="match status" value="1"/>
</dbReference>
<dbReference type="FunFam" id="3.40.1780.10:FF:000001">
    <property type="entry name" value="S-adenosylmethionine:tRNA ribosyltransferase-isomerase"/>
    <property type="match status" value="1"/>
</dbReference>
<dbReference type="Gene3D" id="2.40.10.240">
    <property type="entry name" value="QueA-like"/>
    <property type="match status" value="1"/>
</dbReference>
<dbReference type="Gene3D" id="3.40.1780.10">
    <property type="entry name" value="QueA-like"/>
    <property type="match status" value="1"/>
</dbReference>
<dbReference type="HAMAP" id="MF_00113">
    <property type="entry name" value="QueA"/>
    <property type="match status" value="1"/>
</dbReference>
<dbReference type="InterPro" id="IPR003699">
    <property type="entry name" value="QueA"/>
</dbReference>
<dbReference type="InterPro" id="IPR042118">
    <property type="entry name" value="QueA_dom1"/>
</dbReference>
<dbReference type="InterPro" id="IPR042119">
    <property type="entry name" value="QueA_dom2"/>
</dbReference>
<dbReference type="InterPro" id="IPR036100">
    <property type="entry name" value="QueA_sf"/>
</dbReference>
<dbReference type="NCBIfam" id="NF001140">
    <property type="entry name" value="PRK00147.1"/>
    <property type="match status" value="1"/>
</dbReference>
<dbReference type="NCBIfam" id="TIGR00113">
    <property type="entry name" value="queA"/>
    <property type="match status" value="1"/>
</dbReference>
<dbReference type="PANTHER" id="PTHR30307">
    <property type="entry name" value="S-ADENOSYLMETHIONINE:TRNA RIBOSYLTRANSFERASE-ISOMERASE"/>
    <property type="match status" value="1"/>
</dbReference>
<dbReference type="PANTHER" id="PTHR30307:SF0">
    <property type="entry name" value="S-ADENOSYLMETHIONINE:TRNA RIBOSYLTRANSFERASE-ISOMERASE"/>
    <property type="match status" value="1"/>
</dbReference>
<dbReference type="Pfam" id="PF02547">
    <property type="entry name" value="Queuosine_synth"/>
    <property type="match status" value="1"/>
</dbReference>
<dbReference type="SUPFAM" id="SSF111337">
    <property type="entry name" value="QueA-like"/>
    <property type="match status" value="1"/>
</dbReference>
<protein>
    <recommendedName>
        <fullName>S-adenosylmethionine:tRNA ribosyltransferase-isomerase</fullName>
        <ecNumber>2.4.99.17</ecNumber>
    </recommendedName>
    <alternativeName>
        <fullName>Queuosine biosynthesis protein QueA</fullName>
    </alternativeName>
</protein>
<proteinExistence type="evidence at protein level"/>
<sequence length="335" mass="38662">MKVSEFDYELPPELIAQEPVEPRDASRLMVLHRKTQRIEHRIFREIIEYLEPGDLLVLNVSKVIPARLYARKKTGASIEILLIERLEEGIWKCLVRPGQKVKKGTELVIDEDLSAVCLGRGEDGTRILKFQPQDDRLIFEKGRTPLPPYIKNEVPLERYQTVYAKEEGSVAAPTAGLHFTPELIEKLKKKGVQFAEVVLHVGIGTFRPVKVEEVEKHKMHEEFYQVPKETVRKLRETRERGNRIVAVGTTTVRTLETIARLPEQEEYVGKTDLFIYPPFEFKLVDALVTNFHLPRSTLLMLVAAFAGKDFVMEAYREAVKRRYRFFSFGDAMLIL</sequence>
<name>QUEA_THEMA</name>
<feature type="chain" id="PRO_0000165458" description="S-adenosylmethionine:tRNA ribosyltransferase-isomerase">
    <location>
        <begin position="1"/>
        <end position="335"/>
    </location>
</feature>
<feature type="helix" evidence="4">
    <location>
        <begin position="12"/>
        <end position="14"/>
    </location>
</feature>
<feature type="helix" evidence="4">
    <location>
        <begin position="23"/>
        <end position="25"/>
    </location>
</feature>
<feature type="strand" evidence="4">
    <location>
        <begin position="26"/>
        <end position="32"/>
    </location>
</feature>
<feature type="turn" evidence="4">
    <location>
        <begin position="33"/>
        <end position="36"/>
    </location>
</feature>
<feature type="strand" evidence="4">
    <location>
        <begin position="37"/>
        <end position="42"/>
    </location>
</feature>
<feature type="helix" evidence="4">
    <location>
        <begin position="43"/>
        <end position="49"/>
    </location>
</feature>
<feature type="strand" evidence="4">
    <location>
        <begin position="55"/>
        <end position="63"/>
    </location>
</feature>
<feature type="strand" evidence="4">
    <location>
        <begin position="67"/>
        <end position="71"/>
    </location>
</feature>
<feature type="strand" evidence="4">
    <location>
        <begin position="78"/>
        <end position="87"/>
    </location>
</feature>
<feature type="strand" evidence="4">
    <location>
        <begin position="90"/>
        <end position="97"/>
    </location>
</feature>
<feature type="strand" evidence="4">
    <location>
        <begin position="106"/>
        <end position="110"/>
    </location>
</feature>
<feature type="strand" evidence="4">
    <location>
        <begin position="113"/>
        <end position="120"/>
    </location>
</feature>
<feature type="strand" evidence="4">
    <location>
        <begin position="126"/>
        <end position="132"/>
    </location>
</feature>
<feature type="helix" evidence="4">
    <location>
        <begin position="135"/>
        <end position="141"/>
    </location>
</feature>
<feature type="helix" evidence="4">
    <location>
        <begin position="175"/>
        <end position="178"/>
    </location>
</feature>
<feature type="helix" evidence="4">
    <location>
        <begin position="181"/>
        <end position="190"/>
    </location>
</feature>
<feature type="strand" evidence="4">
    <location>
        <begin position="193"/>
        <end position="201"/>
    </location>
</feature>
<feature type="strand" evidence="4">
    <location>
        <begin position="223"/>
        <end position="226"/>
    </location>
</feature>
<feature type="helix" evidence="4">
    <location>
        <begin position="228"/>
        <end position="240"/>
    </location>
</feature>
<feature type="strand" evidence="4">
    <location>
        <begin position="244"/>
        <end position="248"/>
    </location>
</feature>
<feature type="helix" evidence="4">
    <location>
        <begin position="249"/>
        <end position="258"/>
    </location>
</feature>
<feature type="strand" evidence="4">
    <location>
        <begin position="265"/>
        <end position="269"/>
    </location>
</feature>
<feature type="strand" evidence="4">
    <location>
        <begin position="285"/>
        <end position="290"/>
    </location>
</feature>
<feature type="helix" evidence="4">
    <location>
        <begin position="297"/>
        <end position="306"/>
    </location>
</feature>
<feature type="helix" evidence="4">
    <location>
        <begin position="308"/>
        <end position="320"/>
    </location>
</feature>
<feature type="strand" evidence="4">
    <location>
        <begin position="331"/>
        <end position="335"/>
    </location>
</feature>
<gene>
    <name type="primary">queA</name>
    <name type="ordered locus">TM_0574</name>
</gene>